<name>CHSL1_CANSA</name>
<keyword id="KW-0012">Acyltransferase</keyword>
<keyword id="KW-0963">Cytoplasm</keyword>
<keyword id="KW-0808">Transferase</keyword>
<gene>
    <name type="primary">CAN383</name>
</gene>
<reference key="1">
    <citation type="journal article" date="2009" name="J. Exp. Bot.">
        <title>Identification of candidate genes affecting Delta9-tetrahydrocannabinol biosynthesis in Cannabis sativa.</title>
        <authorList>
            <person name="Marks M.D."/>
            <person name="Tian L."/>
            <person name="Wenger J.P."/>
            <person name="Omburo S.N."/>
            <person name="Soto-Fuentes W."/>
            <person name="He J."/>
            <person name="Gang D.R."/>
            <person name="Weiblen G.D."/>
            <person name="Dixon R.A."/>
        </authorList>
    </citation>
    <scope>NUCLEOTIDE SEQUENCE [MRNA]</scope>
    <scope>FUNCTION</scope>
    <scope>TISSUE SPECIFICITY</scope>
</reference>
<sequence length="392" mass="43175">MASISVDQIRKAQRANGPATVLAIGTANPPTSFYQADYPDFYFRVTKNQHMTELKDKFKRICEKTTIKKRHLYLTEDRLNQHPNLLEYMAPSLNTRQDMLVVEIPKLGKEAAMKAIKEWGQPKSRITHLIFCSTNGVDMPGADYECAKLLGLSSSVKRVMLYQQGCHAGGSVLRIAKDLAENNKGARILTINSEITIGIFHSPDETYFDGMVGQALFGDGASATIVGADPDKEIGERPVFEMVSAAQEFIPNSDGAVDGHLTEAGLVYHIHKDVPGLISKNIEKSLVEALNPIGISDWNSLFWIVHPGGPAILNAVEAKLHLKKEKMADTRHVLSEYGNMSSVSIFFIMDKLRKRSLEEGKSTTGDGFEWGVLFGFGPGLTVETIVLHSLAN</sequence>
<comment type="function">
    <text evidence="2">Chalcone synthase that may use malonyl-CoA and hexanoyl-CoA as substrates but without producing olivetol or olivetolic acid.</text>
</comment>
<comment type="subcellular location">
    <subcellularLocation>
        <location evidence="3">Cytoplasm</location>
    </subcellularLocation>
</comment>
<comment type="tissue specificity">
    <text evidence="2">Expressed at the same level in leaves and in glandular trichomes.</text>
</comment>
<comment type="similarity">
    <text evidence="3">Belongs to the thiolase-like superfamily. Chalcone/stilbene synthases family.</text>
</comment>
<feature type="chain" id="PRO_0000421154" description="Chalcone synthase-like protein 1">
    <location>
        <begin position="1"/>
        <end position="392"/>
    </location>
</feature>
<feature type="active site" evidence="1">
    <location>
        <position position="166"/>
    </location>
</feature>
<dbReference type="EC" id="2.3.1.-"/>
<dbReference type="EMBL" id="GQ222379">
    <property type="protein sequence ID" value="ACT10338.1"/>
    <property type="molecule type" value="mRNA"/>
</dbReference>
<dbReference type="SMR" id="C6KI62"/>
<dbReference type="Proteomes" id="UP000596661">
    <property type="component" value="Unplaced"/>
</dbReference>
<dbReference type="GO" id="GO:0005737">
    <property type="term" value="C:cytoplasm"/>
    <property type="evidence" value="ECO:0007669"/>
    <property type="project" value="UniProtKB-SubCell"/>
</dbReference>
<dbReference type="GO" id="GO:0016747">
    <property type="term" value="F:acyltransferase activity, transferring groups other than amino-acyl groups"/>
    <property type="evidence" value="ECO:0007669"/>
    <property type="project" value="InterPro"/>
</dbReference>
<dbReference type="GO" id="GO:0030639">
    <property type="term" value="P:polyketide biosynthetic process"/>
    <property type="evidence" value="ECO:0007669"/>
    <property type="project" value="TreeGrafter"/>
</dbReference>
<dbReference type="CDD" id="cd00831">
    <property type="entry name" value="CHS_like"/>
    <property type="match status" value="1"/>
</dbReference>
<dbReference type="FunFam" id="3.40.47.10:FF:000014">
    <property type="entry name" value="Chalcone synthase 1"/>
    <property type="match status" value="1"/>
</dbReference>
<dbReference type="FunFam" id="3.40.47.10:FF:000025">
    <property type="entry name" value="Chalcone synthase 2"/>
    <property type="match status" value="1"/>
</dbReference>
<dbReference type="Gene3D" id="3.40.47.10">
    <property type="match status" value="2"/>
</dbReference>
<dbReference type="InterPro" id="IPR012328">
    <property type="entry name" value="Chalcone/stilbene_synt_C"/>
</dbReference>
<dbReference type="InterPro" id="IPR001099">
    <property type="entry name" value="Chalcone/stilbene_synt_N"/>
</dbReference>
<dbReference type="InterPro" id="IPR011141">
    <property type="entry name" value="Polyketide_synthase_type-III"/>
</dbReference>
<dbReference type="InterPro" id="IPR016039">
    <property type="entry name" value="Thiolase-like"/>
</dbReference>
<dbReference type="PANTHER" id="PTHR11877:SF14">
    <property type="entry name" value="CHALCONE SYNTHASE"/>
    <property type="match status" value="1"/>
</dbReference>
<dbReference type="PANTHER" id="PTHR11877">
    <property type="entry name" value="HYDROXYMETHYLGLUTARYL-COA SYNTHASE"/>
    <property type="match status" value="1"/>
</dbReference>
<dbReference type="Pfam" id="PF02797">
    <property type="entry name" value="Chal_sti_synt_C"/>
    <property type="match status" value="1"/>
</dbReference>
<dbReference type="Pfam" id="PF00195">
    <property type="entry name" value="Chal_sti_synt_N"/>
    <property type="match status" value="1"/>
</dbReference>
<dbReference type="PIRSF" id="PIRSF000451">
    <property type="entry name" value="PKS_III"/>
    <property type="match status" value="1"/>
</dbReference>
<dbReference type="SUPFAM" id="SSF53901">
    <property type="entry name" value="Thiolase-like"/>
    <property type="match status" value="2"/>
</dbReference>
<organism>
    <name type="scientific">Cannabis sativa</name>
    <name type="common">Hemp</name>
    <name type="synonym">Marijuana</name>
    <dbReference type="NCBI Taxonomy" id="3483"/>
    <lineage>
        <taxon>Eukaryota</taxon>
        <taxon>Viridiplantae</taxon>
        <taxon>Streptophyta</taxon>
        <taxon>Embryophyta</taxon>
        <taxon>Tracheophyta</taxon>
        <taxon>Spermatophyta</taxon>
        <taxon>Magnoliopsida</taxon>
        <taxon>eudicotyledons</taxon>
        <taxon>Gunneridae</taxon>
        <taxon>Pentapetalae</taxon>
        <taxon>rosids</taxon>
        <taxon>fabids</taxon>
        <taxon>Rosales</taxon>
        <taxon>Cannabaceae</taxon>
        <taxon>Cannabis</taxon>
    </lineage>
</organism>
<accession>C6KI62</accession>
<proteinExistence type="evidence at transcript level"/>
<protein>
    <recommendedName>
        <fullName>Chalcone synthase-like protein 1</fullName>
        <ecNumber>2.3.1.-</ecNumber>
    </recommendedName>
</protein>
<evidence type="ECO:0000250" key="1"/>
<evidence type="ECO:0000269" key="2">
    <source>
    </source>
</evidence>
<evidence type="ECO:0000305" key="3"/>